<organism>
    <name type="scientific">Canavalia lineata</name>
    <name type="common">Beach bean</name>
    <name type="synonym">Dolichos lineatus</name>
    <dbReference type="NCBI Taxonomy" id="28957"/>
    <lineage>
        <taxon>Eukaryota</taxon>
        <taxon>Viridiplantae</taxon>
        <taxon>Streptophyta</taxon>
        <taxon>Embryophyta</taxon>
        <taxon>Tracheophyta</taxon>
        <taxon>Spermatophyta</taxon>
        <taxon>Magnoliopsida</taxon>
        <taxon>eudicotyledons</taxon>
        <taxon>Gunneridae</taxon>
        <taxon>Pentapetalae</taxon>
        <taxon>rosids</taxon>
        <taxon>fabids</taxon>
        <taxon>Fabales</taxon>
        <taxon>Fabaceae</taxon>
        <taxon>Papilionoideae</taxon>
        <taxon>50 kb inversion clade</taxon>
        <taxon>NPAAA clade</taxon>
        <taxon>indigoferoid/millettioid clade</taxon>
        <taxon>Phaseoleae</taxon>
        <taxon>Canavalia</taxon>
    </lineage>
</organism>
<reference key="1">
    <citation type="journal article" date="1993" name="Phytochemistry">
        <title>Primary structures of concanavalin A-like lectins from seeds of two species of Canavalia.</title>
        <authorList>
            <person name="Fujimura S."/>
            <person name="Terada S."/>
            <person name="Jayavardhanan K.K."/>
            <person name="Panikkar K.R."/>
            <person name="Kimoto E."/>
        </authorList>
    </citation>
    <scope>PROTEIN SEQUENCE</scope>
</reference>
<name>CONA_CANLI</name>
<dbReference type="PIR" id="A59415">
    <property type="entry name" value="A59415"/>
</dbReference>
<dbReference type="PDB" id="2CWM">
    <property type="method" value="X-ray"/>
    <property type="resolution" value="1.95 A"/>
    <property type="chains" value="A=1-237"/>
</dbReference>
<dbReference type="PDB" id="2CY6">
    <property type="method" value="X-ray"/>
    <property type="resolution" value="2.00 A"/>
    <property type="chains" value="A/D=1-237"/>
</dbReference>
<dbReference type="PDB" id="2CYF">
    <property type="method" value="X-ray"/>
    <property type="resolution" value="1.80 A"/>
    <property type="chains" value="A=1-237"/>
</dbReference>
<dbReference type="PDB" id="3SNM">
    <property type="method" value="X-ray"/>
    <property type="resolution" value="2.15 A"/>
    <property type="chains" value="A=1-237"/>
</dbReference>
<dbReference type="PDB" id="4DPN">
    <property type="method" value="X-ray"/>
    <property type="resolution" value="2.55 A"/>
    <property type="chains" value="A/D=1-237"/>
</dbReference>
<dbReference type="PDB" id="4I30">
    <property type="method" value="X-ray"/>
    <property type="resolution" value="1.89 A"/>
    <property type="chains" value="A=1-237"/>
</dbReference>
<dbReference type="PDB" id="4TYS">
    <property type="method" value="X-ray"/>
    <property type="resolution" value="3.25 A"/>
    <property type="chains" value="A/B/C/D/E/F=1-237"/>
</dbReference>
<dbReference type="PDB" id="4TZD">
    <property type="method" value="X-ray"/>
    <property type="resolution" value="3.20 A"/>
    <property type="chains" value="A/D=1-237"/>
</dbReference>
<dbReference type="PDB" id="5BYN">
    <property type="method" value="X-ray"/>
    <property type="resolution" value="2.65 A"/>
    <property type="chains" value="A/B=1-237"/>
</dbReference>
<dbReference type="PDBsum" id="2CWM"/>
<dbReference type="PDBsum" id="2CY6"/>
<dbReference type="PDBsum" id="2CYF"/>
<dbReference type="PDBsum" id="3SNM"/>
<dbReference type="PDBsum" id="4DPN"/>
<dbReference type="PDBsum" id="4I30"/>
<dbReference type="PDBsum" id="4TYS"/>
<dbReference type="PDBsum" id="4TZD"/>
<dbReference type="PDBsum" id="5BYN"/>
<dbReference type="SMR" id="P81460"/>
<dbReference type="UniLectin" id="P81460"/>
<dbReference type="EvolutionaryTrace" id="P81460"/>
<dbReference type="GO" id="GO:0005537">
    <property type="term" value="F:D-mannose binding"/>
    <property type="evidence" value="ECO:0007669"/>
    <property type="project" value="UniProtKB-KW"/>
</dbReference>
<dbReference type="GO" id="GO:0046872">
    <property type="term" value="F:metal ion binding"/>
    <property type="evidence" value="ECO:0007669"/>
    <property type="project" value="UniProtKB-KW"/>
</dbReference>
<dbReference type="CDD" id="cd06899">
    <property type="entry name" value="lectin_legume_LecRK_Arcelin_ConA"/>
    <property type="match status" value="1"/>
</dbReference>
<dbReference type="FunFam" id="2.60.120.200:FF:000227">
    <property type="entry name" value="Concanavalin-A"/>
    <property type="match status" value="1"/>
</dbReference>
<dbReference type="Gene3D" id="2.60.120.200">
    <property type="match status" value="1"/>
</dbReference>
<dbReference type="InterPro" id="IPR013320">
    <property type="entry name" value="ConA-like_dom_sf"/>
</dbReference>
<dbReference type="InterPro" id="IPR000985">
    <property type="entry name" value="Lectin_LegA_CS"/>
</dbReference>
<dbReference type="InterPro" id="IPR019825">
    <property type="entry name" value="Lectin_legB_Mn/Ca_BS"/>
</dbReference>
<dbReference type="InterPro" id="IPR001220">
    <property type="entry name" value="Legume_lectin_dom"/>
</dbReference>
<dbReference type="InterPro" id="IPR050258">
    <property type="entry name" value="Leguminous_Lectin"/>
</dbReference>
<dbReference type="PANTHER" id="PTHR32401">
    <property type="entry name" value="CONCANAVALIN A-LIKE LECTIN FAMILY PROTEIN"/>
    <property type="match status" value="1"/>
</dbReference>
<dbReference type="PANTHER" id="PTHR32401:SF47">
    <property type="entry name" value="LEGUME LECTIN DOMAIN-CONTAINING PROTEIN"/>
    <property type="match status" value="1"/>
</dbReference>
<dbReference type="Pfam" id="PF00139">
    <property type="entry name" value="Lectin_legB"/>
    <property type="match status" value="2"/>
</dbReference>
<dbReference type="SUPFAM" id="SSF49899">
    <property type="entry name" value="Concanavalin A-like lectins/glucanases"/>
    <property type="match status" value="1"/>
</dbReference>
<dbReference type="PROSITE" id="PS00308">
    <property type="entry name" value="LECTIN_LEGUME_ALPHA"/>
    <property type="match status" value="1"/>
</dbReference>
<dbReference type="PROSITE" id="PS00307">
    <property type="entry name" value="LECTIN_LEGUME_BETA"/>
    <property type="match status" value="1"/>
</dbReference>
<evidence type="ECO:0000250" key="1"/>
<evidence type="ECO:0000305" key="2"/>
<evidence type="ECO:0007829" key="3">
    <source>
        <dbReference type="PDB" id="2CY6"/>
    </source>
</evidence>
<evidence type="ECO:0007829" key="4">
    <source>
        <dbReference type="PDB" id="3SNM"/>
    </source>
</evidence>
<evidence type="ECO:0007829" key="5">
    <source>
        <dbReference type="PDB" id="4I30"/>
    </source>
</evidence>
<protein>
    <recommendedName>
        <fullName>Concanavalin-A</fullName>
        <shortName>Con A</shortName>
    </recommendedName>
</protein>
<accession>P81460</accession>
<proteinExistence type="evidence at protein level"/>
<keyword id="KW-0002">3D-structure</keyword>
<keyword id="KW-0106">Calcium</keyword>
<keyword id="KW-0903">Direct protein sequencing</keyword>
<keyword id="KW-0430">Lectin</keyword>
<keyword id="KW-0464">Manganese</keyword>
<keyword id="KW-0465">Mannose-binding</keyword>
<keyword id="KW-0479">Metal-binding</keyword>
<sequence>ADTIVAVELDTYPNTDIGDPSYPHIGIDIKSVRSKKTAKWNMQNGKVGTAHIIYNSVGKRLSAVVSYPNGDSATVSYDVDLDNVLPEWVRVGLSASTGLYKETNTILSWSFTSKLKSNSTHETNALHFVFNQFSKDQKDLILQGDATTGTDGNLELTRVSSNGSPQGNSVGRALFYAPVHIWESSAVVASFDATFTFLIKSSDSHPADGIAFFISNIDSSIPSGSTGRLLGLFPDAN</sequence>
<feature type="chain" id="PRO_0000105087" description="Concanavalin-A">
    <location>
        <begin position="1"/>
        <end position="237"/>
    </location>
</feature>
<feature type="binding site" evidence="1">
    <location>
        <position position="8"/>
    </location>
    <ligand>
        <name>Mn(2+)</name>
        <dbReference type="ChEBI" id="CHEBI:29035"/>
    </ligand>
</feature>
<feature type="binding site" evidence="1">
    <location>
        <position position="10"/>
    </location>
    <ligand>
        <name>Ca(2+)</name>
        <dbReference type="ChEBI" id="CHEBI:29108"/>
    </ligand>
</feature>
<feature type="binding site" evidence="1">
    <location>
        <position position="10"/>
    </location>
    <ligand>
        <name>Mn(2+)</name>
        <dbReference type="ChEBI" id="CHEBI:29035"/>
    </ligand>
</feature>
<feature type="binding site" evidence="1">
    <location>
        <position position="12"/>
    </location>
    <ligand>
        <name>a carbohydrate</name>
        <dbReference type="ChEBI" id="CHEBI:16646"/>
    </ligand>
</feature>
<feature type="binding site" evidence="1">
    <location>
        <position position="12"/>
    </location>
    <ligand>
        <name>Ca(2+)</name>
        <dbReference type="ChEBI" id="CHEBI:29108"/>
    </ligand>
</feature>
<feature type="binding site" evidence="1">
    <location>
        <position position="14"/>
    </location>
    <ligand>
        <name>Ca(2+)</name>
        <dbReference type="ChEBI" id="CHEBI:29108"/>
    </ligand>
</feature>
<feature type="binding site" evidence="1">
    <location>
        <position position="19"/>
    </location>
    <ligand>
        <name>Ca(2+)</name>
        <dbReference type="ChEBI" id="CHEBI:29108"/>
    </ligand>
</feature>
<feature type="binding site" evidence="1">
    <location>
        <position position="19"/>
    </location>
    <ligand>
        <name>Mn(2+)</name>
        <dbReference type="ChEBI" id="CHEBI:29035"/>
    </ligand>
</feature>
<feature type="binding site" evidence="1">
    <location>
        <position position="24"/>
    </location>
    <ligand>
        <name>Mn(2+)</name>
        <dbReference type="ChEBI" id="CHEBI:29035"/>
    </ligand>
</feature>
<feature type="binding site" evidence="1">
    <location>
        <begin position="99"/>
        <end position="100"/>
    </location>
    <ligand>
        <name>a carbohydrate</name>
        <dbReference type="ChEBI" id="CHEBI:16646"/>
    </ligand>
</feature>
<feature type="binding site" evidence="1">
    <location>
        <position position="208"/>
    </location>
    <ligand>
        <name>Ca(2+)</name>
        <dbReference type="ChEBI" id="CHEBI:29108"/>
    </ligand>
</feature>
<feature type="binding site" evidence="1">
    <location>
        <position position="228"/>
    </location>
    <ligand>
        <name>a carbohydrate</name>
        <dbReference type="ChEBI" id="CHEBI:16646"/>
    </ligand>
</feature>
<feature type="strand" evidence="5">
    <location>
        <begin position="4"/>
        <end position="10"/>
    </location>
</feature>
<feature type="helix" evidence="5">
    <location>
        <begin position="15"/>
        <end position="17"/>
    </location>
</feature>
<feature type="strand" evidence="5">
    <location>
        <begin position="24"/>
        <end position="33"/>
    </location>
</feature>
<feature type="strand" evidence="5">
    <location>
        <begin position="35"/>
        <end position="39"/>
    </location>
</feature>
<feature type="strand" evidence="5">
    <location>
        <begin position="46"/>
        <end position="55"/>
    </location>
</feature>
<feature type="turn" evidence="5">
    <location>
        <begin position="56"/>
        <end position="59"/>
    </location>
</feature>
<feature type="strand" evidence="5">
    <location>
        <begin position="60"/>
        <end position="66"/>
    </location>
</feature>
<feature type="strand" evidence="5">
    <location>
        <begin position="72"/>
        <end position="78"/>
    </location>
</feature>
<feature type="helix" evidence="5">
    <location>
        <begin position="81"/>
        <end position="83"/>
    </location>
</feature>
<feature type="strand" evidence="5">
    <location>
        <begin position="87"/>
        <end position="96"/>
    </location>
</feature>
<feature type="strand" evidence="3">
    <location>
        <begin position="98"/>
        <end position="100"/>
    </location>
</feature>
<feature type="strand" evidence="5">
    <location>
        <begin position="105"/>
        <end position="116"/>
    </location>
</feature>
<feature type="strand" evidence="5">
    <location>
        <begin position="124"/>
        <end position="132"/>
    </location>
</feature>
<feature type="strand" evidence="5">
    <location>
        <begin position="140"/>
        <end position="144"/>
    </location>
</feature>
<feature type="strand" evidence="5">
    <location>
        <begin position="150"/>
        <end position="152"/>
    </location>
</feature>
<feature type="strand" evidence="5">
    <location>
        <begin position="154"/>
        <end position="157"/>
    </location>
</feature>
<feature type="turn" evidence="4">
    <location>
        <begin position="161"/>
        <end position="163"/>
    </location>
</feature>
<feature type="strand" evidence="5">
    <location>
        <begin position="170"/>
        <end position="177"/>
    </location>
</feature>
<feature type="strand" evidence="5">
    <location>
        <begin position="187"/>
        <end position="199"/>
    </location>
</feature>
<feature type="strand" evidence="5">
    <location>
        <begin position="203"/>
        <end position="205"/>
    </location>
</feature>
<feature type="strand" evidence="5">
    <location>
        <begin position="209"/>
        <end position="216"/>
    </location>
</feature>
<feature type="helix" evidence="5">
    <location>
        <begin position="227"/>
        <end position="229"/>
    </location>
</feature>
<feature type="turn" evidence="5">
    <location>
        <begin position="230"/>
        <end position="232"/>
    </location>
</feature>
<comment type="function">
    <text>Glucose/D-mannose specific lectin.</text>
</comment>
<comment type="subunit">
    <text>Homotetramer.</text>
</comment>
<comment type="miscellaneous">
    <text>Binds one manganese (or another transition metal) ion and one calcium ion. The metal ions are essential for the saccharide-binding and cell-agglutinating activities.</text>
</comment>
<comment type="similarity">
    <text evidence="2">Belongs to the leguminous lectin family.</text>
</comment>